<keyword id="KW-0732">Signal</keyword>
<name>Y237_VIBVU</name>
<dbReference type="EMBL" id="AE016795">
    <property type="protein sequence ID" value="AAO08774.1"/>
    <property type="molecule type" value="Genomic_DNA"/>
</dbReference>
<dbReference type="RefSeq" id="WP_011078352.1">
    <property type="nucleotide sequence ID" value="NC_004459.3"/>
</dbReference>
<dbReference type="SMR" id="Q8DFH4"/>
<dbReference type="KEGG" id="vvu:VV1_0237"/>
<dbReference type="HOGENOM" id="CLU_073782_0_0_6"/>
<dbReference type="Proteomes" id="UP000002275">
    <property type="component" value="Chromosome 1"/>
</dbReference>
<dbReference type="HAMAP" id="MF_00789">
    <property type="entry name" value="UPF0319"/>
    <property type="match status" value="1"/>
</dbReference>
<dbReference type="InterPro" id="IPR018635">
    <property type="entry name" value="UPF0319"/>
</dbReference>
<dbReference type="PANTHER" id="PTHR38108">
    <property type="entry name" value="UPF0319 PROTEIN YCCT"/>
    <property type="match status" value="1"/>
</dbReference>
<dbReference type="PANTHER" id="PTHR38108:SF1">
    <property type="entry name" value="UPF0319 PROTEIN YCCT"/>
    <property type="match status" value="1"/>
</dbReference>
<dbReference type="Pfam" id="PF09829">
    <property type="entry name" value="DUF2057"/>
    <property type="match status" value="1"/>
</dbReference>
<sequence length="196" mass="22143">MKKMMILSALALFSSSLFAANLTLQKEITPQIVNGEGVTLQEVHNGNRIELKPGHNQIAVTIGQIVFEDGKRRKFDSQPLLLEFVAKPEQALTLKYGKFRTIDDAKKFENNPTVHLTDAQGNPVAFTMVQLYKGGLQGFRDYEREVADYNAQKAQKADSAPLVNHDPKAMDLKTAFKEMTRQEQQAFMQWAMQNLK</sequence>
<feature type="signal peptide" evidence="1">
    <location>
        <begin position="1"/>
        <end position="19"/>
    </location>
</feature>
<feature type="chain" id="PRO_0000036311" description="UPF0319 protein VV1_0237">
    <location>
        <begin position="20"/>
        <end position="196"/>
    </location>
</feature>
<proteinExistence type="inferred from homology"/>
<evidence type="ECO:0000255" key="1">
    <source>
        <dbReference type="HAMAP-Rule" id="MF_00789"/>
    </source>
</evidence>
<organism>
    <name type="scientific">Vibrio vulnificus (strain CMCP6)</name>
    <dbReference type="NCBI Taxonomy" id="216895"/>
    <lineage>
        <taxon>Bacteria</taxon>
        <taxon>Pseudomonadati</taxon>
        <taxon>Pseudomonadota</taxon>
        <taxon>Gammaproteobacteria</taxon>
        <taxon>Vibrionales</taxon>
        <taxon>Vibrionaceae</taxon>
        <taxon>Vibrio</taxon>
    </lineage>
</organism>
<comment type="similarity">
    <text evidence="1">Belongs to the UPF0319 family.</text>
</comment>
<accession>Q8DFH4</accession>
<reference key="1">
    <citation type="submission" date="2002-12" db="EMBL/GenBank/DDBJ databases">
        <title>Complete genome sequence of Vibrio vulnificus CMCP6.</title>
        <authorList>
            <person name="Rhee J.H."/>
            <person name="Kim S.Y."/>
            <person name="Chung S.S."/>
            <person name="Kim J.J."/>
            <person name="Moon Y.H."/>
            <person name="Jeong H."/>
            <person name="Choy H.E."/>
        </authorList>
    </citation>
    <scope>NUCLEOTIDE SEQUENCE [LARGE SCALE GENOMIC DNA]</scope>
    <source>
        <strain>CMCP6</strain>
    </source>
</reference>
<protein>
    <recommendedName>
        <fullName evidence="1">UPF0319 protein VV1_0237</fullName>
    </recommendedName>
</protein>
<gene>
    <name type="ordered locus">VV1_0237</name>
</gene>